<evidence type="ECO:0000255" key="1">
    <source>
        <dbReference type="PROSITE-ProRule" id="PRU00448"/>
    </source>
</evidence>
<evidence type="ECO:0000269" key="2">
    <source>
    </source>
</evidence>
<evidence type="ECO:0000269" key="3">
    <source>
    </source>
</evidence>
<evidence type="ECO:0000269" key="4">
    <source>
    </source>
</evidence>
<evidence type="ECO:0000269" key="5">
    <source>
    </source>
</evidence>
<evidence type="ECO:0000269" key="6">
    <source>
    </source>
</evidence>
<evidence type="ECO:0000303" key="7">
    <source>
    </source>
</evidence>
<evidence type="ECO:0000303" key="8">
    <source ref="5"/>
</evidence>
<evidence type="ECO:0000305" key="9"/>
<evidence type="ECO:0000312" key="10">
    <source>
        <dbReference type="Araport" id="AT3G51920"/>
    </source>
</evidence>
<evidence type="ECO:0000312" key="11">
    <source>
        <dbReference type="EMBL" id="CAB41312.1"/>
    </source>
</evidence>
<feature type="chain" id="PRO_0000073653" description="Calmodulin-like protein 9">
    <location>
        <begin position="1"/>
        <end position="151"/>
    </location>
</feature>
<feature type="domain" description="EF-hand 1" evidence="1">
    <location>
        <begin position="8"/>
        <end position="43"/>
    </location>
</feature>
<feature type="domain" description="EF-hand 2" evidence="1">
    <location>
        <begin position="44"/>
        <end position="79"/>
    </location>
</feature>
<feature type="domain" description="EF-hand 3" evidence="1">
    <location>
        <begin position="81"/>
        <end position="116"/>
    </location>
</feature>
<feature type="domain" description="EF-hand 4" evidence="1">
    <location>
        <begin position="117"/>
        <end position="151"/>
    </location>
</feature>
<feature type="binding site" evidence="1">
    <location>
        <position position="94"/>
    </location>
    <ligand>
        <name>Ca(2+)</name>
        <dbReference type="ChEBI" id="CHEBI:29108"/>
        <label>1</label>
    </ligand>
</feature>
<feature type="binding site" evidence="1">
    <location>
        <position position="96"/>
    </location>
    <ligand>
        <name>Ca(2+)</name>
        <dbReference type="ChEBI" id="CHEBI:29108"/>
        <label>1</label>
    </ligand>
</feature>
<feature type="binding site" evidence="1">
    <location>
        <position position="98"/>
    </location>
    <ligand>
        <name>Ca(2+)</name>
        <dbReference type="ChEBI" id="CHEBI:29108"/>
        <label>1</label>
    </ligand>
</feature>
<feature type="binding site" evidence="1">
    <location>
        <position position="105"/>
    </location>
    <ligand>
        <name>Ca(2+)</name>
        <dbReference type="ChEBI" id="CHEBI:29108"/>
        <label>1</label>
    </ligand>
</feature>
<feature type="binding site" evidence="1">
    <location>
        <position position="130"/>
    </location>
    <ligand>
        <name>Ca(2+)</name>
        <dbReference type="ChEBI" id="CHEBI:29108"/>
        <label>2</label>
    </ligand>
</feature>
<feature type="binding site" evidence="1">
    <location>
        <position position="132"/>
    </location>
    <ligand>
        <name>Ca(2+)</name>
        <dbReference type="ChEBI" id="CHEBI:29108"/>
        <label>2</label>
    </ligand>
</feature>
<feature type="binding site" evidence="1">
    <location>
        <position position="134"/>
    </location>
    <ligand>
        <name>Ca(2+)</name>
        <dbReference type="ChEBI" id="CHEBI:29108"/>
        <label>2</label>
    </ligand>
</feature>
<feature type="binding site" evidence="1">
    <location>
        <position position="141"/>
    </location>
    <ligand>
        <name>Ca(2+)</name>
        <dbReference type="ChEBI" id="CHEBI:29108"/>
        <label>2</label>
    </ligand>
</feature>
<dbReference type="EMBL" id="AF178075">
    <property type="protein sequence ID" value="AAD53315.1"/>
    <property type="molecule type" value="mRNA"/>
</dbReference>
<dbReference type="EMBL" id="AL049711">
    <property type="protein sequence ID" value="CAB41312.1"/>
    <property type="molecule type" value="Genomic_DNA"/>
</dbReference>
<dbReference type="EMBL" id="CP002686">
    <property type="protein sequence ID" value="AEE78863.1"/>
    <property type="molecule type" value="Genomic_DNA"/>
</dbReference>
<dbReference type="EMBL" id="AF380635">
    <property type="protein sequence ID" value="AAK55716.1"/>
    <property type="molecule type" value="mRNA"/>
</dbReference>
<dbReference type="EMBL" id="AY054133">
    <property type="protein sequence ID" value="AAL06794.1"/>
    <property type="molecule type" value="mRNA"/>
</dbReference>
<dbReference type="PIR" id="T49071">
    <property type="entry name" value="T49071"/>
</dbReference>
<dbReference type="RefSeq" id="NP_190760.1">
    <property type="nucleotide sequence ID" value="NM_115051.3"/>
</dbReference>
<dbReference type="SMR" id="Q9S744"/>
<dbReference type="BioGRID" id="9673">
    <property type="interactions" value="119"/>
</dbReference>
<dbReference type="FunCoup" id="Q9S744">
    <property type="interactions" value="207"/>
</dbReference>
<dbReference type="IntAct" id="Q9S744">
    <property type="interactions" value="115"/>
</dbReference>
<dbReference type="STRING" id="3702.Q9S744"/>
<dbReference type="PaxDb" id="3702-AT3G51920.1"/>
<dbReference type="ProteomicsDB" id="240910"/>
<dbReference type="EnsemblPlants" id="AT3G51920.1">
    <property type="protein sequence ID" value="AT3G51920.1"/>
    <property type="gene ID" value="AT3G51920"/>
</dbReference>
<dbReference type="GeneID" id="824355"/>
<dbReference type="Gramene" id="AT3G51920.1">
    <property type="protein sequence ID" value="AT3G51920.1"/>
    <property type="gene ID" value="AT3G51920"/>
</dbReference>
<dbReference type="KEGG" id="ath:AT3G51920"/>
<dbReference type="Araport" id="AT3G51920"/>
<dbReference type="TAIR" id="AT3G51920">
    <property type="gene designation" value="CAM9"/>
</dbReference>
<dbReference type="eggNOG" id="KOG0027">
    <property type="taxonomic scope" value="Eukaryota"/>
</dbReference>
<dbReference type="HOGENOM" id="CLU_061288_2_0_1"/>
<dbReference type="InParanoid" id="Q9S744"/>
<dbReference type="OMA" id="QQMMSDV"/>
<dbReference type="PhylomeDB" id="Q9S744"/>
<dbReference type="PRO" id="PR:Q9S744"/>
<dbReference type="Proteomes" id="UP000006548">
    <property type="component" value="Chromosome 3"/>
</dbReference>
<dbReference type="ExpressionAtlas" id="Q9S744">
    <property type="expression patterns" value="baseline and differential"/>
</dbReference>
<dbReference type="GO" id="GO:0005829">
    <property type="term" value="C:cytosol"/>
    <property type="evidence" value="ECO:0000314"/>
    <property type="project" value="TAIR"/>
</dbReference>
<dbReference type="GO" id="GO:0005634">
    <property type="term" value="C:nucleus"/>
    <property type="evidence" value="ECO:0000314"/>
    <property type="project" value="TAIR"/>
</dbReference>
<dbReference type="GO" id="GO:0005509">
    <property type="term" value="F:calcium ion binding"/>
    <property type="evidence" value="ECO:0007669"/>
    <property type="project" value="InterPro"/>
</dbReference>
<dbReference type="GO" id="GO:0019722">
    <property type="term" value="P:calcium-mediated signaling"/>
    <property type="evidence" value="ECO:0000316"/>
    <property type="project" value="TAIR"/>
</dbReference>
<dbReference type="GO" id="GO:0005513">
    <property type="term" value="P:detection of calcium ion"/>
    <property type="evidence" value="ECO:0000250"/>
    <property type="project" value="TAIR"/>
</dbReference>
<dbReference type="GO" id="GO:0009737">
    <property type="term" value="P:response to abscisic acid"/>
    <property type="evidence" value="ECO:0000315"/>
    <property type="project" value="TAIR"/>
</dbReference>
<dbReference type="GO" id="GO:0009651">
    <property type="term" value="P:response to salt stress"/>
    <property type="evidence" value="ECO:0000315"/>
    <property type="project" value="TAIR"/>
</dbReference>
<dbReference type="GO" id="GO:0009414">
    <property type="term" value="P:response to water deprivation"/>
    <property type="evidence" value="ECO:0000315"/>
    <property type="project" value="TAIR"/>
</dbReference>
<dbReference type="CDD" id="cd00051">
    <property type="entry name" value="EFh"/>
    <property type="match status" value="2"/>
</dbReference>
<dbReference type="FunFam" id="1.10.238.10:FF:000457">
    <property type="entry name" value="mRNA, clone: RTFL01-44-H24"/>
    <property type="match status" value="1"/>
</dbReference>
<dbReference type="FunFam" id="1.10.238.10:FF:000608">
    <property type="entry name" value="mRNA, clone: RTFL01-44-H24"/>
    <property type="match status" value="1"/>
</dbReference>
<dbReference type="Gene3D" id="1.10.238.10">
    <property type="entry name" value="EF-hand"/>
    <property type="match status" value="2"/>
</dbReference>
<dbReference type="InterPro" id="IPR050230">
    <property type="entry name" value="CALM/Myosin/TropC-like"/>
</dbReference>
<dbReference type="InterPro" id="IPR011992">
    <property type="entry name" value="EF-hand-dom_pair"/>
</dbReference>
<dbReference type="InterPro" id="IPR018247">
    <property type="entry name" value="EF_Hand_1_Ca_BS"/>
</dbReference>
<dbReference type="InterPro" id="IPR002048">
    <property type="entry name" value="EF_hand_dom"/>
</dbReference>
<dbReference type="PANTHER" id="PTHR23048:SF59">
    <property type="entry name" value="EF-HAND SUPERFAMILY PROTEIN"/>
    <property type="match status" value="1"/>
</dbReference>
<dbReference type="PANTHER" id="PTHR23048">
    <property type="entry name" value="MYOSIN LIGHT CHAIN 1, 3"/>
    <property type="match status" value="1"/>
</dbReference>
<dbReference type="Pfam" id="PF13499">
    <property type="entry name" value="EF-hand_7"/>
    <property type="match status" value="2"/>
</dbReference>
<dbReference type="SMART" id="SM00054">
    <property type="entry name" value="EFh"/>
    <property type="match status" value="4"/>
</dbReference>
<dbReference type="SUPFAM" id="SSF47473">
    <property type="entry name" value="EF-hand"/>
    <property type="match status" value="1"/>
</dbReference>
<dbReference type="PROSITE" id="PS00018">
    <property type="entry name" value="EF_HAND_1"/>
    <property type="match status" value="2"/>
</dbReference>
<dbReference type="PROSITE" id="PS50222">
    <property type="entry name" value="EF_HAND_2"/>
    <property type="match status" value="4"/>
</dbReference>
<gene>
    <name evidence="8" type="primary">CML9</name>
    <name evidence="7" type="synonym">CAM9</name>
    <name evidence="10" type="ordered locus">At3g51920</name>
    <name evidence="11" type="ORF">F4F15.30</name>
</gene>
<comment type="function">
    <text evidence="2">Potential calcium sensor.</text>
</comment>
<comment type="subunit">
    <text evidence="4 5 6">Interacts with IQD1 (PubMed:23204523). Interacts with ILK1 (PubMed:27208244). Binds to ABCG36 (PubMed:26315018).</text>
</comment>
<comment type="interaction">
    <interactant intactId="EBI-1236048">
        <id>Q9S744</id>
    </interactant>
    <interactant intactId="EBI-537551">
        <id>Q9LDI3</id>
        <label>CIPK24</label>
    </interactant>
    <organismsDiffer>false</organismsDiffer>
    <experiments>2</experiments>
</comment>
<comment type="interaction">
    <interactant intactId="EBI-1236048">
        <id>Q9S744</id>
    </interactant>
    <interactant intactId="EBI-1235738">
        <id>Q9SSF8</id>
        <label>CPK30</label>
    </interactant>
    <organismsDiffer>false</organismsDiffer>
    <experiments>2</experiments>
</comment>
<comment type="interaction">
    <interactant intactId="EBI-1236048">
        <id>Q9S744</id>
    </interactant>
    <interactant intactId="EBI-1235834">
        <id>P55737</id>
        <label>HSP90-2</label>
    </interactant>
    <organismsDiffer>false</organismsDiffer>
    <experiments>2</experiments>
</comment>
<comment type="interaction">
    <interactant intactId="EBI-1236048">
        <id>Q9S744</id>
    </interactant>
    <interactant intactId="EBI-1235872">
        <id>Q9SND6</id>
        <label>MAPKKK20</label>
    </interactant>
    <organismsDiffer>false</organismsDiffer>
    <experiments>2</experiments>
</comment>
<comment type="interaction">
    <interactant intactId="EBI-1236048">
        <id>Q9S744</id>
    </interactant>
    <interactant intactId="EBI-1236013">
        <id>P83755</id>
        <label>psbA</label>
    </interactant>
    <organismsDiffer>false</organismsDiffer>
    <experiments>2</experiments>
</comment>
<comment type="interaction">
    <interactant intactId="EBI-1236048">
        <id>Q9S744</id>
    </interactant>
    <interactant intactId="EBI-1235819">
        <id>Q2V359</id>
        <label>SAUR70</label>
    </interactant>
    <organismsDiffer>false</organismsDiffer>
    <experiments>2</experiments>
</comment>
<comment type="interaction">
    <interactant intactId="EBI-1236048">
        <id>Q9S744</id>
    </interactant>
    <interactant intactId="EBI-1235980">
        <id>Q9SUP6</id>
        <label>WRKY53</label>
    </interactant>
    <organismsDiffer>false</organismsDiffer>
    <experiments>2</experiments>
</comment>
<comment type="tissue specificity">
    <text evidence="2">Expressed in leaves, flowers and siliques.</text>
</comment>
<comment type="induction">
    <text evidence="3">By touch and during darkness conditions.</text>
</comment>
<comment type="similarity">
    <text evidence="9">Belongs to the calmodulin family.</text>
</comment>
<name>CML9_ARATH</name>
<accession>Q9S744</accession>
<reference key="1">
    <citation type="journal article" date="2002" name="Planta">
        <title>Characterization of three new members of the Arabidopsis thaliana calmodulin gene family: conserved and highly diverged members of the gene family functionally complement a yeast calmodulin null.</title>
        <authorList>
            <person name="Zielinski R.E."/>
        </authorList>
    </citation>
    <scope>NUCLEOTIDE SEQUENCE [MRNA]</scope>
    <scope>FUNCTION</scope>
    <scope>TISSUE SPECIFICITY</scope>
    <source>
        <strain>cv. Columbia</strain>
    </source>
</reference>
<reference key="2">
    <citation type="journal article" date="2000" name="Nature">
        <title>Sequence and analysis of chromosome 3 of the plant Arabidopsis thaliana.</title>
        <authorList>
            <person name="Salanoubat M."/>
            <person name="Lemcke K."/>
            <person name="Rieger M."/>
            <person name="Ansorge W."/>
            <person name="Unseld M."/>
            <person name="Fartmann B."/>
            <person name="Valle G."/>
            <person name="Bloecker H."/>
            <person name="Perez-Alonso M."/>
            <person name="Obermaier B."/>
            <person name="Delseny M."/>
            <person name="Boutry M."/>
            <person name="Grivell L.A."/>
            <person name="Mache R."/>
            <person name="Puigdomenech P."/>
            <person name="De Simone V."/>
            <person name="Choisne N."/>
            <person name="Artiguenave F."/>
            <person name="Robert C."/>
            <person name="Brottier P."/>
            <person name="Wincker P."/>
            <person name="Cattolico L."/>
            <person name="Weissenbach J."/>
            <person name="Saurin W."/>
            <person name="Quetier F."/>
            <person name="Schaefer M."/>
            <person name="Mueller-Auer S."/>
            <person name="Gabel C."/>
            <person name="Fuchs M."/>
            <person name="Benes V."/>
            <person name="Wurmbach E."/>
            <person name="Drzonek H."/>
            <person name="Erfle H."/>
            <person name="Jordan N."/>
            <person name="Bangert S."/>
            <person name="Wiedelmann R."/>
            <person name="Kranz H."/>
            <person name="Voss H."/>
            <person name="Holland R."/>
            <person name="Brandt P."/>
            <person name="Nyakatura G."/>
            <person name="Vezzi A."/>
            <person name="D'Angelo M."/>
            <person name="Pallavicini A."/>
            <person name="Toppo S."/>
            <person name="Simionati B."/>
            <person name="Conrad A."/>
            <person name="Hornischer K."/>
            <person name="Kauer G."/>
            <person name="Loehnert T.-H."/>
            <person name="Nordsiek G."/>
            <person name="Reichelt J."/>
            <person name="Scharfe M."/>
            <person name="Schoen O."/>
            <person name="Bargues M."/>
            <person name="Terol J."/>
            <person name="Climent J."/>
            <person name="Navarro P."/>
            <person name="Collado C."/>
            <person name="Perez-Perez A."/>
            <person name="Ottenwaelder B."/>
            <person name="Duchemin D."/>
            <person name="Cooke R."/>
            <person name="Laudie M."/>
            <person name="Berger-Llauro C."/>
            <person name="Purnelle B."/>
            <person name="Masuy D."/>
            <person name="de Haan M."/>
            <person name="Maarse A.C."/>
            <person name="Alcaraz J.-P."/>
            <person name="Cottet A."/>
            <person name="Casacuberta E."/>
            <person name="Monfort A."/>
            <person name="Argiriou A."/>
            <person name="Flores M."/>
            <person name="Liguori R."/>
            <person name="Vitale D."/>
            <person name="Mannhaupt G."/>
            <person name="Haase D."/>
            <person name="Schoof H."/>
            <person name="Rudd S."/>
            <person name="Zaccaria P."/>
            <person name="Mewes H.-W."/>
            <person name="Mayer K.F.X."/>
            <person name="Kaul S."/>
            <person name="Town C.D."/>
            <person name="Koo H.L."/>
            <person name="Tallon L.J."/>
            <person name="Jenkins J."/>
            <person name="Rooney T."/>
            <person name="Rizzo M."/>
            <person name="Walts A."/>
            <person name="Utterback T."/>
            <person name="Fujii C.Y."/>
            <person name="Shea T.P."/>
            <person name="Creasy T.H."/>
            <person name="Haas B."/>
            <person name="Maiti R."/>
            <person name="Wu D."/>
            <person name="Peterson J."/>
            <person name="Van Aken S."/>
            <person name="Pai G."/>
            <person name="Militscher J."/>
            <person name="Sellers P."/>
            <person name="Gill J.E."/>
            <person name="Feldblyum T.V."/>
            <person name="Preuss D."/>
            <person name="Lin X."/>
            <person name="Nierman W.C."/>
            <person name="Salzberg S.L."/>
            <person name="White O."/>
            <person name="Venter J.C."/>
            <person name="Fraser C.M."/>
            <person name="Kaneko T."/>
            <person name="Nakamura Y."/>
            <person name="Sato S."/>
            <person name="Kato T."/>
            <person name="Asamizu E."/>
            <person name="Sasamoto S."/>
            <person name="Kimura T."/>
            <person name="Idesawa K."/>
            <person name="Kawashima K."/>
            <person name="Kishida Y."/>
            <person name="Kiyokawa C."/>
            <person name="Kohara M."/>
            <person name="Matsumoto M."/>
            <person name="Matsuno A."/>
            <person name="Muraki A."/>
            <person name="Nakayama S."/>
            <person name="Nakazaki N."/>
            <person name="Shinpo S."/>
            <person name="Takeuchi C."/>
            <person name="Wada T."/>
            <person name="Watanabe A."/>
            <person name="Yamada M."/>
            <person name="Yasuda M."/>
            <person name="Tabata S."/>
        </authorList>
    </citation>
    <scope>NUCLEOTIDE SEQUENCE [LARGE SCALE GENOMIC DNA]</scope>
    <source>
        <strain>cv. Columbia</strain>
    </source>
</reference>
<reference key="3">
    <citation type="journal article" date="2017" name="Plant J.">
        <title>Araport11: a complete reannotation of the Arabidopsis thaliana reference genome.</title>
        <authorList>
            <person name="Cheng C.Y."/>
            <person name="Krishnakumar V."/>
            <person name="Chan A.P."/>
            <person name="Thibaud-Nissen F."/>
            <person name="Schobel S."/>
            <person name="Town C.D."/>
        </authorList>
    </citation>
    <scope>GENOME REANNOTATION</scope>
    <source>
        <strain>cv. Columbia</strain>
    </source>
</reference>
<reference key="4">
    <citation type="journal article" date="2003" name="Science">
        <title>Empirical analysis of transcriptional activity in the Arabidopsis genome.</title>
        <authorList>
            <person name="Yamada K."/>
            <person name="Lim J."/>
            <person name="Dale J.M."/>
            <person name="Chen H."/>
            <person name="Shinn P."/>
            <person name="Palm C.J."/>
            <person name="Southwick A.M."/>
            <person name="Wu H.C."/>
            <person name="Kim C.J."/>
            <person name="Nguyen M."/>
            <person name="Pham P.K."/>
            <person name="Cheuk R.F."/>
            <person name="Karlin-Newmann G."/>
            <person name="Liu S.X."/>
            <person name="Lam B."/>
            <person name="Sakano H."/>
            <person name="Wu T."/>
            <person name="Yu G."/>
            <person name="Miranda M."/>
            <person name="Quach H.L."/>
            <person name="Tripp M."/>
            <person name="Chang C.H."/>
            <person name="Lee J.M."/>
            <person name="Toriumi M.J."/>
            <person name="Chan M.M."/>
            <person name="Tang C.C."/>
            <person name="Onodera C.S."/>
            <person name="Deng J.M."/>
            <person name="Akiyama K."/>
            <person name="Ansari Y."/>
            <person name="Arakawa T."/>
            <person name="Banh J."/>
            <person name="Banno F."/>
            <person name="Bowser L."/>
            <person name="Brooks S.Y."/>
            <person name="Carninci P."/>
            <person name="Chao Q."/>
            <person name="Choy N."/>
            <person name="Enju A."/>
            <person name="Goldsmith A.D."/>
            <person name="Gurjal M."/>
            <person name="Hansen N.F."/>
            <person name="Hayashizaki Y."/>
            <person name="Johnson-Hopson C."/>
            <person name="Hsuan V.W."/>
            <person name="Iida K."/>
            <person name="Karnes M."/>
            <person name="Khan S."/>
            <person name="Koesema E."/>
            <person name="Ishida J."/>
            <person name="Jiang P.X."/>
            <person name="Jones T."/>
            <person name="Kawai J."/>
            <person name="Kamiya A."/>
            <person name="Meyers C."/>
            <person name="Nakajima M."/>
            <person name="Narusaka M."/>
            <person name="Seki M."/>
            <person name="Sakurai T."/>
            <person name="Satou M."/>
            <person name="Tamse R."/>
            <person name="Vaysberg M."/>
            <person name="Wallender E.K."/>
            <person name="Wong C."/>
            <person name="Yamamura Y."/>
            <person name="Yuan S."/>
            <person name="Shinozaki K."/>
            <person name="Davis R.W."/>
            <person name="Theologis A."/>
            <person name="Ecker J.R."/>
        </authorList>
    </citation>
    <scope>NUCLEOTIDE SEQUENCE [LARGE SCALE MRNA]</scope>
    <source>
        <strain>cv. Columbia</strain>
    </source>
</reference>
<reference key="5">
    <citation type="journal article" date="2003" name="New Phytol.">
        <title>Calmodulins and related potential calcium sensors of Arabidopsis.</title>
        <authorList>
            <person name="McCormack E."/>
            <person name="Braam J."/>
        </authorList>
    </citation>
    <scope>GENE FAMILY</scope>
    <scope>NOMENCLATURE</scope>
</reference>
<reference key="6">
    <citation type="journal article" date="2005" name="New Phytol.">
        <title>Genome-wide identification of touch- and darkness-regulated Arabidopsis genes: a focus on calmodulin-like and XTH genes.</title>
        <authorList>
            <person name="Lee D."/>
            <person name="Polisensky D.H."/>
            <person name="Braam J."/>
        </authorList>
    </citation>
    <scope>INDUCTION</scope>
</reference>
<reference key="7">
    <citation type="journal article" date="2013" name="J. Biol. Chem.">
        <title>Arabidopsis calmodulin-binding protein IQ67-domain 1 localizes to microtubules and interacts with kinesin light chain-related protein-1.</title>
        <authorList>
            <person name="Buerstenbinder K."/>
            <person name="Savchenko T."/>
            <person name="Mueller J."/>
            <person name="Adamson A.W."/>
            <person name="Stamm G."/>
            <person name="Kwong R."/>
            <person name="Zipp B.J."/>
            <person name="Dinesh D.C."/>
            <person name="Abel S."/>
        </authorList>
    </citation>
    <scope>INTERACTION WITH IQD1</scope>
    <source>
        <strain>cv. Columbia</strain>
    </source>
</reference>
<reference key="8">
    <citation type="journal article" date="2016" name="New Phytol.">
        <title>ABC transporter PEN3/PDR8/ABCG36 interacts with calmodulin that, like PEN3, is required for Arabidopsis nonhost resistance.</title>
        <authorList>
            <person name="Campe R."/>
            <person name="Langenbach C."/>
            <person name="Leissing F."/>
            <person name="Popescu G.V."/>
            <person name="Popescu S.C."/>
            <person name="Goellner K."/>
            <person name="Beckers G.J."/>
            <person name="Conrath U."/>
        </authorList>
    </citation>
    <scope>INTERACTION WITH ABCG36</scope>
    <source>
        <strain>cv. Columbia</strain>
    </source>
</reference>
<reference key="9">
    <citation type="journal article" date="2016" name="Plant Physiol.">
        <title>The Raf-like kinase ILK1 and the high affinity K+ transporter HAK5 are required for innate immunity and abiotic stress response.</title>
        <authorList>
            <person name="Brauer E.K."/>
            <person name="Ahsan N."/>
            <person name="Dale R."/>
            <person name="Kato N."/>
            <person name="Coluccio A.E."/>
            <person name="Pineros M.A."/>
            <person name="Kochian L.V."/>
            <person name="Thelen J.J."/>
            <person name="Popescu S.C."/>
        </authorList>
    </citation>
    <scope>INTERACTION WITH ILK1</scope>
</reference>
<keyword id="KW-0106">Calcium</keyword>
<keyword id="KW-0479">Metal-binding</keyword>
<keyword id="KW-1185">Reference proteome</keyword>
<keyword id="KW-0677">Repeat</keyword>
<protein>
    <recommendedName>
        <fullName evidence="8">Calmodulin-like protein 9</fullName>
        <shortName evidence="7">AtCaM-9</shortName>
    </recommendedName>
</protein>
<organism>
    <name type="scientific">Arabidopsis thaliana</name>
    <name type="common">Mouse-ear cress</name>
    <dbReference type="NCBI Taxonomy" id="3702"/>
    <lineage>
        <taxon>Eukaryota</taxon>
        <taxon>Viridiplantae</taxon>
        <taxon>Streptophyta</taxon>
        <taxon>Embryophyta</taxon>
        <taxon>Tracheophyta</taxon>
        <taxon>Spermatophyta</taxon>
        <taxon>Magnoliopsida</taxon>
        <taxon>eudicotyledons</taxon>
        <taxon>Gunneridae</taxon>
        <taxon>Pentapetalae</taxon>
        <taxon>rosids</taxon>
        <taxon>malvids</taxon>
        <taxon>Brassicales</taxon>
        <taxon>Brassicaceae</taxon>
        <taxon>Camelineae</taxon>
        <taxon>Arabidopsis</taxon>
    </lineage>
</organism>
<sequence>MADAFTDEQIQEFYEAFCLIDKDSDGFITKEKLTKVMKSMGKNPKAEQLQQMMSDVDIFGNGGITFDDFLYIMAQNTSQESASDELIEVFRVFDRDGDGLISQLELGEGMKDMGMKITAEEAEHMVREADLDGDGFLSFHEFSKMMIAASY</sequence>
<proteinExistence type="evidence at protein level"/>